<feature type="chain" id="PRO_1000116397" description="Probable tRNA sulfurtransferase">
    <location>
        <begin position="1"/>
        <end position="404"/>
    </location>
</feature>
<feature type="domain" description="THUMP" evidence="1">
    <location>
        <begin position="61"/>
        <end position="166"/>
    </location>
</feature>
<feature type="binding site" evidence="1">
    <location>
        <begin position="184"/>
        <end position="185"/>
    </location>
    <ligand>
        <name>ATP</name>
        <dbReference type="ChEBI" id="CHEBI:30616"/>
    </ligand>
</feature>
<feature type="binding site" evidence="1">
    <location>
        <begin position="209"/>
        <end position="210"/>
    </location>
    <ligand>
        <name>ATP</name>
        <dbReference type="ChEBI" id="CHEBI:30616"/>
    </ligand>
</feature>
<feature type="binding site" evidence="1">
    <location>
        <position position="266"/>
    </location>
    <ligand>
        <name>ATP</name>
        <dbReference type="ChEBI" id="CHEBI:30616"/>
    </ligand>
</feature>
<feature type="binding site" evidence="1">
    <location>
        <position position="288"/>
    </location>
    <ligand>
        <name>ATP</name>
        <dbReference type="ChEBI" id="CHEBI:30616"/>
    </ligand>
</feature>
<feature type="binding site" evidence="1">
    <location>
        <position position="297"/>
    </location>
    <ligand>
        <name>ATP</name>
        <dbReference type="ChEBI" id="CHEBI:30616"/>
    </ligand>
</feature>
<evidence type="ECO:0000255" key="1">
    <source>
        <dbReference type="HAMAP-Rule" id="MF_00021"/>
    </source>
</evidence>
<keyword id="KW-0067">ATP-binding</keyword>
<keyword id="KW-0963">Cytoplasm</keyword>
<keyword id="KW-0547">Nucleotide-binding</keyword>
<keyword id="KW-0694">RNA-binding</keyword>
<keyword id="KW-0784">Thiamine biosynthesis</keyword>
<keyword id="KW-0808">Transferase</keyword>
<keyword id="KW-0820">tRNA-binding</keyword>
<reference key="1">
    <citation type="submission" date="2008-10" db="EMBL/GenBank/DDBJ databases">
        <title>Genome sequence of Bacillus cereus B4264.</title>
        <authorList>
            <person name="Dodson R.J."/>
            <person name="Durkin A.S."/>
            <person name="Rosovitz M.J."/>
            <person name="Rasko D.A."/>
            <person name="Hoffmaster A."/>
            <person name="Ravel J."/>
            <person name="Sutton G."/>
        </authorList>
    </citation>
    <scope>NUCLEOTIDE SEQUENCE [LARGE SCALE GENOMIC DNA]</scope>
    <source>
        <strain>B4264</strain>
    </source>
</reference>
<sequence>MLKYEYILVRYGEMTTKGKNRSKFVSTLKDNVKFKLKKFPNIKIDATHDRMYIQLNGEDHEAVSERLKDVFGIHKFNLAMKVPSELEDIKEGALAAFLQVKGDVKTFKITVHRSYKHFPMRTMELLPEIGGHILENTEDITVDVHNPDVNVRVEIRSGYSYIMCDERMGAGGLPVGVGGKVMVLLSGGIDSPVAAYLTMKRGVSVEAVHFHSPPFTSERAKQKVIDLAQELTKYCKRVTLHLVPFTEVQKTINKEIPSSYSMTVMRRMMMRITERIAEERNALAITTGESLGQVASQTLDSMHTINEVTNYPVIRPLITMDKLEIIKIAEEIGTYDISIRPYEDCCTVFTPASPATKPKREKANRFEAKYDFTPLIDEAVANKETMVLQTVEVVAEEEKFEELF</sequence>
<organism>
    <name type="scientific">Bacillus cereus (strain B4264)</name>
    <dbReference type="NCBI Taxonomy" id="405532"/>
    <lineage>
        <taxon>Bacteria</taxon>
        <taxon>Bacillati</taxon>
        <taxon>Bacillota</taxon>
        <taxon>Bacilli</taxon>
        <taxon>Bacillales</taxon>
        <taxon>Bacillaceae</taxon>
        <taxon>Bacillus</taxon>
        <taxon>Bacillus cereus group</taxon>
    </lineage>
</organism>
<dbReference type="EC" id="2.8.1.4" evidence="1"/>
<dbReference type="EMBL" id="CP001176">
    <property type="protein sequence ID" value="ACK60169.1"/>
    <property type="molecule type" value="Genomic_DNA"/>
</dbReference>
<dbReference type="RefSeq" id="WP_000922337.1">
    <property type="nucleotide sequence ID" value="NZ_VEHB01000005.1"/>
</dbReference>
<dbReference type="SMR" id="B7H703"/>
<dbReference type="KEGG" id="bcb:BCB4264_A4756"/>
<dbReference type="HOGENOM" id="CLU_037952_4_0_9"/>
<dbReference type="UniPathway" id="UPA00060"/>
<dbReference type="Proteomes" id="UP000007096">
    <property type="component" value="Chromosome"/>
</dbReference>
<dbReference type="GO" id="GO:0005829">
    <property type="term" value="C:cytosol"/>
    <property type="evidence" value="ECO:0007669"/>
    <property type="project" value="TreeGrafter"/>
</dbReference>
<dbReference type="GO" id="GO:0005524">
    <property type="term" value="F:ATP binding"/>
    <property type="evidence" value="ECO:0007669"/>
    <property type="project" value="UniProtKB-UniRule"/>
</dbReference>
<dbReference type="GO" id="GO:0004810">
    <property type="term" value="F:CCA tRNA nucleotidyltransferase activity"/>
    <property type="evidence" value="ECO:0007669"/>
    <property type="project" value="InterPro"/>
</dbReference>
<dbReference type="GO" id="GO:0000049">
    <property type="term" value="F:tRNA binding"/>
    <property type="evidence" value="ECO:0007669"/>
    <property type="project" value="UniProtKB-UniRule"/>
</dbReference>
<dbReference type="GO" id="GO:0140741">
    <property type="term" value="F:tRNA-uracil-4 sulfurtransferase activity"/>
    <property type="evidence" value="ECO:0007669"/>
    <property type="project" value="UniProtKB-EC"/>
</dbReference>
<dbReference type="GO" id="GO:0009228">
    <property type="term" value="P:thiamine biosynthetic process"/>
    <property type="evidence" value="ECO:0007669"/>
    <property type="project" value="UniProtKB-KW"/>
</dbReference>
<dbReference type="GO" id="GO:0009229">
    <property type="term" value="P:thiamine diphosphate biosynthetic process"/>
    <property type="evidence" value="ECO:0007669"/>
    <property type="project" value="UniProtKB-UniRule"/>
</dbReference>
<dbReference type="GO" id="GO:0052837">
    <property type="term" value="P:thiazole biosynthetic process"/>
    <property type="evidence" value="ECO:0007669"/>
    <property type="project" value="TreeGrafter"/>
</dbReference>
<dbReference type="GO" id="GO:0002937">
    <property type="term" value="P:tRNA 4-thiouridine biosynthesis"/>
    <property type="evidence" value="ECO:0007669"/>
    <property type="project" value="TreeGrafter"/>
</dbReference>
<dbReference type="CDD" id="cd01712">
    <property type="entry name" value="PPase_ThiI"/>
    <property type="match status" value="1"/>
</dbReference>
<dbReference type="CDD" id="cd11716">
    <property type="entry name" value="THUMP_ThiI"/>
    <property type="match status" value="1"/>
</dbReference>
<dbReference type="FunFam" id="3.30.2130.30:FF:000003">
    <property type="entry name" value="Probable tRNA sulfurtransferase"/>
    <property type="match status" value="1"/>
</dbReference>
<dbReference type="FunFam" id="3.40.50.620:FF:000053">
    <property type="entry name" value="Probable tRNA sulfurtransferase"/>
    <property type="match status" value="1"/>
</dbReference>
<dbReference type="Gene3D" id="3.30.2130.30">
    <property type="match status" value="1"/>
</dbReference>
<dbReference type="Gene3D" id="3.40.50.620">
    <property type="entry name" value="HUPs"/>
    <property type="match status" value="1"/>
</dbReference>
<dbReference type="HAMAP" id="MF_00021">
    <property type="entry name" value="ThiI"/>
    <property type="match status" value="1"/>
</dbReference>
<dbReference type="InterPro" id="IPR014729">
    <property type="entry name" value="Rossmann-like_a/b/a_fold"/>
</dbReference>
<dbReference type="InterPro" id="IPR020536">
    <property type="entry name" value="ThiI_AANH"/>
</dbReference>
<dbReference type="InterPro" id="IPR054173">
    <property type="entry name" value="ThiI_fer"/>
</dbReference>
<dbReference type="InterPro" id="IPR049961">
    <property type="entry name" value="ThiI_N"/>
</dbReference>
<dbReference type="InterPro" id="IPR004114">
    <property type="entry name" value="THUMP_dom"/>
</dbReference>
<dbReference type="InterPro" id="IPR049962">
    <property type="entry name" value="THUMP_ThiI"/>
</dbReference>
<dbReference type="InterPro" id="IPR003720">
    <property type="entry name" value="tRNA_STrfase"/>
</dbReference>
<dbReference type="InterPro" id="IPR050102">
    <property type="entry name" value="tRNA_sulfurtransferase_ThiI"/>
</dbReference>
<dbReference type="NCBIfam" id="TIGR00342">
    <property type="entry name" value="tRNA uracil 4-sulfurtransferase ThiI"/>
    <property type="match status" value="1"/>
</dbReference>
<dbReference type="PANTHER" id="PTHR43209">
    <property type="entry name" value="TRNA SULFURTRANSFERASE"/>
    <property type="match status" value="1"/>
</dbReference>
<dbReference type="PANTHER" id="PTHR43209:SF1">
    <property type="entry name" value="TRNA SULFURTRANSFERASE"/>
    <property type="match status" value="1"/>
</dbReference>
<dbReference type="Pfam" id="PF02568">
    <property type="entry name" value="ThiI"/>
    <property type="match status" value="1"/>
</dbReference>
<dbReference type="Pfam" id="PF22025">
    <property type="entry name" value="ThiI_fer"/>
    <property type="match status" value="1"/>
</dbReference>
<dbReference type="Pfam" id="PF02926">
    <property type="entry name" value="THUMP"/>
    <property type="match status" value="1"/>
</dbReference>
<dbReference type="SMART" id="SM00981">
    <property type="entry name" value="THUMP"/>
    <property type="match status" value="1"/>
</dbReference>
<dbReference type="SUPFAM" id="SSF52402">
    <property type="entry name" value="Adenine nucleotide alpha hydrolases-like"/>
    <property type="match status" value="1"/>
</dbReference>
<dbReference type="SUPFAM" id="SSF143437">
    <property type="entry name" value="THUMP domain-like"/>
    <property type="match status" value="1"/>
</dbReference>
<dbReference type="PROSITE" id="PS51165">
    <property type="entry name" value="THUMP"/>
    <property type="match status" value="1"/>
</dbReference>
<protein>
    <recommendedName>
        <fullName evidence="1">Probable tRNA sulfurtransferase</fullName>
        <ecNumber evidence="1">2.8.1.4</ecNumber>
    </recommendedName>
    <alternativeName>
        <fullName evidence="1">Sulfur carrier protein ThiS sulfurtransferase</fullName>
    </alternativeName>
    <alternativeName>
        <fullName evidence="1">Thiamine biosynthesis protein ThiI</fullName>
    </alternativeName>
    <alternativeName>
        <fullName evidence="1">tRNA 4-thiouridine synthase</fullName>
    </alternativeName>
</protein>
<proteinExistence type="inferred from homology"/>
<accession>B7H703</accession>
<comment type="function">
    <text evidence="1">Catalyzes the ATP-dependent transfer of a sulfur to tRNA to produce 4-thiouridine in position 8 of tRNAs, which functions as a near-UV photosensor. Also catalyzes the transfer of sulfur to the sulfur carrier protein ThiS, forming ThiS-thiocarboxylate. This is a step in the synthesis of thiazole, in the thiamine biosynthesis pathway. The sulfur is donated as persulfide by IscS.</text>
</comment>
<comment type="catalytic activity">
    <reaction evidence="1">
        <text>[ThiI sulfur-carrier protein]-S-sulfanyl-L-cysteine + a uridine in tRNA + 2 reduced [2Fe-2S]-[ferredoxin] + ATP + H(+) = [ThiI sulfur-carrier protein]-L-cysteine + a 4-thiouridine in tRNA + 2 oxidized [2Fe-2S]-[ferredoxin] + AMP + diphosphate</text>
        <dbReference type="Rhea" id="RHEA:24176"/>
        <dbReference type="Rhea" id="RHEA-COMP:10000"/>
        <dbReference type="Rhea" id="RHEA-COMP:10001"/>
        <dbReference type="Rhea" id="RHEA-COMP:13337"/>
        <dbReference type="Rhea" id="RHEA-COMP:13338"/>
        <dbReference type="Rhea" id="RHEA-COMP:13339"/>
        <dbReference type="Rhea" id="RHEA-COMP:13340"/>
        <dbReference type="ChEBI" id="CHEBI:15378"/>
        <dbReference type="ChEBI" id="CHEBI:29950"/>
        <dbReference type="ChEBI" id="CHEBI:30616"/>
        <dbReference type="ChEBI" id="CHEBI:33019"/>
        <dbReference type="ChEBI" id="CHEBI:33737"/>
        <dbReference type="ChEBI" id="CHEBI:33738"/>
        <dbReference type="ChEBI" id="CHEBI:61963"/>
        <dbReference type="ChEBI" id="CHEBI:65315"/>
        <dbReference type="ChEBI" id="CHEBI:136798"/>
        <dbReference type="ChEBI" id="CHEBI:456215"/>
        <dbReference type="EC" id="2.8.1.4"/>
    </reaction>
</comment>
<comment type="catalytic activity">
    <reaction evidence="1">
        <text>[ThiS sulfur-carrier protein]-C-terminal Gly-Gly-AMP + S-sulfanyl-L-cysteinyl-[cysteine desulfurase] + AH2 = [ThiS sulfur-carrier protein]-C-terminal-Gly-aminoethanethioate + L-cysteinyl-[cysteine desulfurase] + A + AMP + 2 H(+)</text>
        <dbReference type="Rhea" id="RHEA:43340"/>
        <dbReference type="Rhea" id="RHEA-COMP:12157"/>
        <dbReference type="Rhea" id="RHEA-COMP:12158"/>
        <dbReference type="Rhea" id="RHEA-COMP:12910"/>
        <dbReference type="Rhea" id="RHEA-COMP:19908"/>
        <dbReference type="ChEBI" id="CHEBI:13193"/>
        <dbReference type="ChEBI" id="CHEBI:15378"/>
        <dbReference type="ChEBI" id="CHEBI:17499"/>
        <dbReference type="ChEBI" id="CHEBI:29950"/>
        <dbReference type="ChEBI" id="CHEBI:61963"/>
        <dbReference type="ChEBI" id="CHEBI:90618"/>
        <dbReference type="ChEBI" id="CHEBI:232372"/>
        <dbReference type="ChEBI" id="CHEBI:456215"/>
    </reaction>
</comment>
<comment type="pathway">
    <text evidence="1">Cofactor biosynthesis; thiamine diphosphate biosynthesis.</text>
</comment>
<comment type="subcellular location">
    <subcellularLocation>
        <location evidence="1">Cytoplasm</location>
    </subcellularLocation>
</comment>
<comment type="similarity">
    <text evidence="1">Belongs to the ThiI family.</text>
</comment>
<name>THII_BACC4</name>
<gene>
    <name evidence="1" type="primary">thiI</name>
    <name type="ordered locus">BCB4264_A4756</name>
</gene>